<proteinExistence type="evidence at protein level"/>
<sequence>ITIVDCSDYPKPVCSLEYMPLCGSDSKTYSNKCDFCNAVVDSNGTLNLSHFGKC</sequence>
<accession>P05577</accession>
<dbReference type="PIR" id="H31436">
    <property type="entry name" value="H31436"/>
</dbReference>
<dbReference type="SMR" id="P05577"/>
<dbReference type="GO" id="GO:0005576">
    <property type="term" value="C:extracellular region"/>
    <property type="evidence" value="ECO:0007669"/>
    <property type="project" value="UniProtKB-SubCell"/>
</dbReference>
<dbReference type="GO" id="GO:0004867">
    <property type="term" value="F:serine-type endopeptidase inhibitor activity"/>
    <property type="evidence" value="ECO:0007669"/>
    <property type="project" value="UniProtKB-KW"/>
</dbReference>
<dbReference type="CDD" id="cd00104">
    <property type="entry name" value="KAZAL_FS"/>
    <property type="match status" value="1"/>
</dbReference>
<dbReference type="FunFam" id="3.30.60.30:FF:000037">
    <property type="entry name" value="Ovomucoid"/>
    <property type="match status" value="1"/>
</dbReference>
<dbReference type="Gene3D" id="3.30.60.30">
    <property type="match status" value="1"/>
</dbReference>
<dbReference type="InterPro" id="IPR051597">
    <property type="entry name" value="Bifunctional_prot_inhibitor"/>
</dbReference>
<dbReference type="InterPro" id="IPR002350">
    <property type="entry name" value="Kazal_dom"/>
</dbReference>
<dbReference type="InterPro" id="IPR036058">
    <property type="entry name" value="Kazal_dom_sf"/>
</dbReference>
<dbReference type="InterPro" id="IPR001239">
    <property type="entry name" value="Prot_inh_Kazal-m"/>
</dbReference>
<dbReference type="PANTHER" id="PTHR47729:SF1">
    <property type="entry name" value="OVOMUCOID-LIKE-RELATED"/>
    <property type="match status" value="1"/>
</dbReference>
<dbReference type="PANTHER" id="PTHR47729">
    <property type="entry name" value="SERINE PEPTIDASE INHIBITOR, KAZAL TYPE 2, TANDEM DUPLICATE 1-RELATED"/>
    <property type="match status" value="1"/>
</dbReference>
<dbReference type="Pfam" id="PF00050">
    <property type="entry name" value="Kazal_1"/>
    <property type="match status" value="1"/>
</dbReference>
<dbReference type="PRINTS" id="PR00290">
    <property type="entry name" value="KAZALINHBTR"/>
</dbReference>
<dbReference type="SMART" id="SM00280">
    <property type="entry name" value="KAZAL"/>
    <property type="match status" value="1"/>
</dbReference>
<dbReference type="SUPFAM" id="SSF100895">
    <property type="entry name" value="Kazal-type serine protease inhibitors"/>
    <property type="match status" value="1"/>
</dbReference>
<dbReference type="PROSITE" id="PS00282">
    <property type="entry name" value="KAZAL_1"/>
    <property type="match status" value="1"/>
</dbReference>
<dbReference type="PROSITE" id="PS51465">
    <property type="entry name" value="KAZAL_2"/>
    <property type="match status" value="1"/>
</dbReference>
<protein>
    <recommendedName>
        <fullName>Ovomucoid</fullName>
    </recommendedName>
</protein>
<name>IOVO_HALIN</name>
<reference key="1">
    <citation type="journal article" date="1987" name="Biochemistry">
        <title>Ovomucoid third domains from 100 avian species: isolation, sequences, and hypervariability of enzyme-inhibitor contact residues.</title>
        <authorList>
            <person name="Laskowski M. Jr."/>
            <person name="Kato I."/>
            <person name="Ardelt W."/>
            <person name="Cook J."/>
            <person name="Denton A."/>
            <person name="Empie M.W."/>
            <person name="Kohr W.J."/>
            <person name="Park S.J."/>
            <person name="Parks K."/>
            <person name="Schatzley B.L."/>
            <person name="Schoenberger O.L."/>
            <person name="Tashiro M."/>
            <person name="Vichot G."/>
            <person name="Whatley H.E."/>
            <person name="Wieczorek A."/>
            <person name="Wieczorek M."/>
        </authorList>
    </citation>
    <scope>PROTEIN SEQUENCE</scope>
</reference>
<evidence type="ECO:0000255" key="1">
    <source>
        <dbReference type="PROSITE-ProRule" id="PRU00798"/>
    </source>
</evidence>
<feature type="chain" id="PRO_0000073125" description="Ovomucoid">
    <location>
        <begin position="1" status="less than"/>
        <end position="54" status="greater than"/>
    </location>
</feature>
<feature type="domain" description="Kazal-like" evidence="1">
    <location>
        <begin position="4"/>
        <end position="54"/>
    </location>
</feature>
<feature type="site" description="Reactive bond 3">
    <location>
        <begin position="16"/>
        <end position="17"/>
    </location>
</feature>
<feature type="glycosylation site" description="N-linked (GlcNAc...) asparagine">
    <location>
        <position position="43"/>
    </location>
</feature>
<feature type="disulfide bond">
    <location>
        <begin position="6"/>
        <end position="36"/>
    </location>
</feature>
<feature type="disulfide bond">
    <location>
        <begin position="14"/>
        <end position="33"/>
    </location>
</feature>
<feature type="disulfide bond">
    <location>
        <begin position="22"/>
        <end position="54"/>
    </location>
</feature>
<feature type="non-terminal residue">
    <location>
        <position position="1"/>
    </location>
</feature>
<feature type="non-terminal residue">
    <location>
        <position position="54"/>
    </location>
</feature>
<keyword id="KW-0903">Direct protein sequencing</keyword>
<keyword id="KW-1015">Disulfide bond</keyword>
<keyword id="KW-0325">Glycoprotein</keyword>
<keyword id="KW-0646">Protease inhibitor</keyword>
<keyword id="KW-0677">Repeat</keyword>
<keyword id="KW-0964">Secreted</keyword>
<keyword id="KW-0722">Serine protease inhibitor</keyword>
<organism>
    <name type="scientific">Haliastur indus</name>
    <name type="common">Brahminy kite</name>
    <dbReference type="NCBI Taxonomy" id="8971"/>
    <lineage>
        <taxon>Eukaryota</taxon>
        <taxon>Metazoa</taxon>
        <taxon>Chordata</taxon>
        <taxon>Craniata</taxon>
        <taxon>Vertebrata</taxon>
        <taxon>Euteleostomi</taxon>
        <taxon>Archelosauria</taxon>
        <taxon>Archosauria</taxon>
        <taxon>Dinosauria</taxon>
        <taxon>Saurischia</taxon>
        <taxon>Theropoda</taxon>
        <taxon>Coelurosauria</taxon>
        <taxon>Aves</taxon>
        <taxon>Neognathae</taxon>
        <taxon>Neoaves</taxon>
        <taxon>Telluraves</taxon>
        <taxon>Accipitrimorphae</taxon>
        <taxon>Accipitriformes</taxon>
        <taxon>Accipitridae</taxon>
        <taxon>Accipitrinae</taxon>
        <taxon>Haliastur</taxon>
    </lineage>
</organism>
<comment type="subcellular location">
    <subcellularLocation>
        <location>Secreted</location>
    </subcellularLocation>
</comment>
<comment type="domain">
    <text>Avian ovomucoid consists of three homologous, tandem Kazal family inhibitory domains.</text>
</comment>